<comment type="function">
    <text evidence="1">Toxic component of a type II toxin-antitoxin (TA) system. Upon expression in M.smegmatis inhibits colony formation. Its toxic effect is neutralized by coexpression with cognate antitoxin Rv0298/MT0312.</text>
</comment>
<sequence>MIAPGDIAPRRDSEHELYVAVLSNALHRAADTGRVITCPFIPGRVPEDLLAMVVAVEQPNGTLLPELVQWLHVAALGAPLGNAGVAALREAASVVTALLC</sequence>
<gene>
    <name type="ordered locus">Rv0299</name>
</gene>
<accession>O07226</accession>
<accession>L0T4Y8</accession>
<organism>
    <name type="scientific">Mycobacterium tuberculosis (strain ATCC 25618 / H37Rv)</name>
    <dbReference type="NCBI Taxonomy" id="83332"/>
    <lineage>
        <taxon>Bacteria</taxon>
        <taxon>Bacillati</taxon>
        <taxon>Actinomycetota</taxon>
        <taxon>Actinomycetes</taxon>
        <taxon>Mycobacteriales</taxon>
        <taxon>Mycobacteriaceae</taxon>
        <taxon>Mycobacterium</taxon>
        <taxon>Mycobacterium tuberculosis complex</taxon>
    </lineage>
</organism>
<dbReference type="EMBL" id="AL123456">
    <property type="protein sequence ID" value="CCP43029.1"/>
    <property type="molecule type" value="Genomic_DNA"/>
</dbReference>
<dbReference type="PIR" id="D70523">
    <property type="entry name" value="D70523"/>
</dbReference>
<dbReference type="RefSeq" id="NP_214813.1">
    <property type="nucleotide sequence ID" value="NC_000962.3"/>
</dbReference>
<dbReference type="RefSeq" id="WP_003401560.1">
    <property type="nucleotide sequence ID" value="NZ_NVQJ01000026.1"/>
</dbReference>
<dbReference type="SMR" id="O07226"/>
<dbReference type="STRING" id="83332.Rv0299"/>
<dbReference type="PaxDb" id="83332-Rv0299"/>
<dbReference type="DNASU" id="886598"/>
<dbReference type="GeneID" id="886598"/>
<dbReference type="KEGG" id="mtu:Rv0299"/>
<dbReference type="KEGG" id="mtv:RVBD_0299"/>
<dbReference type="TubercuList" id="Rv0299"/>
<dbReference type="eggNOG" id="ENOG5032DWV">
    <property type="taxonomic scope" value="Bacteria"/>
</dbReference>
<dbReference type="InParanoid" id="O07226"/>
<dbReference type="OrthoDB" id="4731447at2"/>
<dbReference type="Proteomes" id="UP000001584">
    <property type="component" value="Chromosome"/>
</dbReference>
<dbReference type="GO" id="GO:0045926">
    <property type="term" value="P:negative regulation of growth"/>
    <property type="evidence" value="ECO:0000315"/>
    <property type="project" value="MTBBASE"/>
</dbReference>
<protein>
    <recommendedName>
        <fullName>Toxin Rv0299</fullName>
    </recommendedName>
</protein>
<evidence type="ECO:0000269" key="1">
    <source>
    </source>
</evidence>
<proteinExistence type="evidence at protein level"/>
<feature type="chain" id="PRO_0000406883" description="Toxin Rv0299">
    <location>
        <begin position="1"/>
        <end position="100"/>
    </location>
</feature>
<keyword id="KW-1185">Reference proteome</keyword>
<keyword id="KW-1277">Toxin-antitoxin system</keyword>
<name>Y299_MYCTU</name>
<reference key="1">
    <citation type="journal article" date="1998" name="Nature">
        <title>Deciphering the biology of Mycobacterium tuberculosis from the complete genome sequence.</title>
        <authorList>
            <person name="Cole S.T."/>
            <person name="Brosch R."/>
            <person name="Parkhill J."/>
            <person name="Garnier T."/>
            <person name="Churcher C.M."/>
            <person name="Harris D.E."/>
            <person name="Gordon S.V."/>
            <person name="Eiglmeier K."/>
            <person name="Gas S."/>
            <person name="Barry C.E. III"/>
            <person name="Tekaia F."/>
            <person name="Badcock K."/>
            <person name="Basham D."/>
            <person name="Brown D."/>
            <person name="Chillingworth T."/>
            <person name="Connor R."/>
            <person name="Davies R.M."/>
            <person name="Devlin K."/>
            <person name="Feltwell T."/>
            <person name="Gentles S."/>
            <person name="Hamlin N."/>
            <person name="Holroyd S."/>
            <person name="Hornsby T."/>
            <person name="Jagels K."/>
            <person name="Krogh A."/>
            <person name="McLean J."/>
            <person name="Moule S."/>
            <person name="Murphy L.D."/>
            <person name="Oliver S."/>
            <person name="Osborne J."/>
            <person name="Quail M.A."/>
            <person name="Rajandream M.A."/>
            <person name="Rogers J."/>
            <person name="Rutter S."/>
            <person name="Seeger K."/>
            <person name="Skelton S."/>
            <person name="Squares S."/>
            <person name="Squares R."/>
            <person name="Sulston J.E."/>
            <person name="Taylor K."/>
            <person name="Whitehead S."/>
            <person name="Barrell B.G."/>
        </authorList>
    </citation>
    <scope>NUCLEOTIDE SEQUENCE [LARGE SCALE GENOMIC DNA]</scope>
    <source>
        <strain>ATCC 25618 / H37Rv</strain>
    </source>
</reference>
<reference key="2">
    <citation type="journal article" date="2009" name="PLoS Genet.">
        <title>Comprehensive functional analysis of Mycobacterium tuberculosis toxin-antitoxin systems: implications for pathogenesis, stress responses, and evolution.</title>
        <authorList>
            <person name="Ramage H.R."/>
            <person name="Connolly L.E."/>
            <person name="Cox J.S."/>
        </authorList>
    </citation>
    <scope>EXPRESSION IN M.SMEGMATIS</scope>
    <scope>FUNCTION AS A TOXIN</scope>
    <source>
        <strain>ATCC 35801 / TMC 107 / Erdman</strain>
    </source>
</reference>
<reference key="3">
    <citation type="journal article" date="2011" name="Mol. Cell. Proteomics">
        <title>Proteogenomic analysis of Mycobacterium tuberculosis by high resolution mass spectrometry.</title>
        <authorList>
            <person name="Kelkar D.S."/>
            <person name="Kumar D."/>
            <person name="Kumar P."/>
            <person name="Balakrishnan L."/>
            <person name="Muthusamy B."/>
            <person name="Yadav A.K."/>
            <person name="Shrivastava P."/>
            <person name="Marimuthu A."/>
            <person name="Anand S."/>
            <person name="Sundaram H."/>
            <person name="Kingsbury R."/>
            <person name="Harsha H.C."/>
            <person name="Nair B."/>
            <person name="Prasad T.S."/>
            <person name="Chauhan D.S."/>
            <person name="Katoch K."/>
            <person name="Katoch V.M."/>
            <person name="Kumar P."/>
            <person name="Chaerkady R."/>
            <person name="Ramachandran S."/>
            <person name="Dash D."/>
            <person name="Pandey A."/>
        </authorList>
    </citation>
    <scope>IDENTIFICATION BY MASS SPECTROMETRY [LARGE SCALE ANALYSIS]</scope>
    <source>
        <strain>ATCC 25618 / H37Rv</strain>
    </source>
</reference>